<organism>
    <name type="scientific">Bacillus cereus (strain G9842)</name>
    <dbReference type="NCBI Taxonomy" id="405531"/>
    <lineage>
        <taxon>Bacteria</taxon>
        <taxon>Bacillati</taxon>
        <taxon>Bacillota</taxon>
        <taxon>Bacilli</taxon>
        <taxon>Bacillales</taxon>
        <taxon>Bacillaceae</taxon>
        <taxon>Bacillus</taxon>
        <taxon>Bacillus cereus group</taxon>
    </lineage>
</organism>
<keyword id="KW-0488">Methylation</keyword>
<keyword id="KW-0687">Ribonucleoprotein</keyword>
<keyword id="KW-0689">Ribosomal protein</keyword>
<keyword id="KW-0694">RNA-binding</keyword>
<keyword id="KW-0699">rRNA-binding</keyword>
<proteinExistence type="inferred from homology"/>
<sequence>MAKKVIKMVKLQIPAGKANPAPPVGPALGQAGVNIMGFCKEFNARTADQAGLIIPVEITVFEDRSFTFITKTPPAAVLLKKVAGIESGSGEPNRNKVATVKRDKVREIAETKMPDLNAASVEAAMRMVEGTARSMGIVIED</sequence>
<name>RL11_BACC2</name>
<reference key="1">
    <citation type="submission" date="2008-10" db="EMBL/GenBank/DDBJ databases">
        <title>Genome sequence of Bacillus cereus G9842.</title>
        <authorList>
            <person name="Dodson R.J."/>
            <person name="Durkin A.S."/>
            <person name="Rosovitz M.J."/>
            <person name="Rasko D.A."/>
            <person name="Hoffmaster A."/>
            <person name="Ravel J."/>
            <person name="Sutton G."/>
        </authorList>
    </citation>
    <scope>NUCLEOTIDE SEQUENCE [LARGE SCALE GENOMIC DNA]</scope>
    <source>
        <strain>G9842</strain>
    </source>
</reference>
<dbReference type="EMBL" id="CP001186">
    <property type="protein sequence ID" value="ACK97945.1"/>
    <property type="molecule type" value="Genomic_DNA"/>
</dbReference>
<dbReference type="RefSeq" id="WP_001085872.1">
    <property type="nucleotide sequence ID" value="NC_011772.1"/>
</dbReference>
<dbReference type="SMR" id="B7IT06"/>
<dbReference type="GeneID" id="93010956"/>
<dbReference type="KEGG" id="bcg:BCG9842_B5209"/>
<dbReference type="HOGENOM" id="CLU_074237_2_1_9"/>
<dbReference type="Proteomes" id="UP000006744">
    <property type="component" value="Chromosome"/>
</dbReference>
<dbReference type="GO" id="GO:0022625">
    <property type="term" value="C:cytosolic large ribosomal subunit"/>
    <property type="evidence" value="ECO:0007669"/>
    <property type="project" value="TreeGrafter"/>
</dbReference>
<dbReference type="GO" id="GO:0070180">
    <property type="term" value="F:large ribosomal subunit rRNA binding"/>
    <property type="evidence" value="ECO:0007669"/>
    <property type="project" value="UniProtKB-UniRule"/>
</dbReference>
<dbReference type="GO" id="GO:0003735">
    <property type="term" value="F:structural constituent of ribosome"/>
    <property type="evidence" value="ECO:0007669"/>
    <property type="project" value="InterPro"/>
</dbReference>
<dbReference type="GO" id="GO:0006412">
    <property type="term" value="P:translation"/>
    <property type="evidence" value="ECO:0007669"/>
    <property type="project" value="UniProtKB-UniRule"/>
</dbReference>
<dbReference type="CDD" id="cd00349">
    <property type="entry name" value="Ribosomal_L11"/>
    <property type="match status" value="1"/>
</dbReference>
<dbReference type="FunFam" id="1.10.10.250:FF:000001">
    <property type="entry name" value="50S ribosomal protein L11"/>
    <property type="match status" value="1"/>
</dbReference>
<dbReference type="FunFam" id="3.30.1550.10:FF:000001">
    <property type="entry name" value="50S ribosomal protein L11"/>
    <property type="match status" value="1"/>
</dbReference>
<dbReference type="Gene3D" id="1.10.10.250">
    <property type="entry name" value="Ribosomal protein L11, C-terminal domain"/>
    <property type="match status" value="1"/>
</dbReference>
<dbReference type="Gene3D" id="3.30.1550.10">
    <property type="entry name" value="Ribosomal protein L11/L12, N-terminal domain"/>
    <property type="match status" value="1"/>
</dbReference>
<dbReference type="HAMAP" id="MF_00736">
    <property type="entry name" value="Ribosomal_uL11"/>
    <property type="match status" value="1"/>
</dbReference>
<dbReference type="InterPro" id="IPR000911">
    <property type="entry name" value="Ribosomal_uL11"/>
</dbReference>
<dbReference type="InterPro" id="IPR006519">
    <property type="entry name" value="Ribosomal_uL11_bac-typ"/>
</dbReference>
<dbReference type="InterPro" id="IPR020783">
    <property type="entry name" value="Ribosomal_uL11_C"/>
</dbReference>
<dbReference type="InterPro" id="IPR036769">
    <property type="entry name" value="Ribosomal_uL11_C_sf"/>
</dbReference>
<dbReference type="InterPro" id="IPR020785">
    <property type="entry name" value="Ribosomal_uL11_CS"/>
</dbReference>
<dbReference type="InterPro" id="IPR020784">
    <property type="entry name" value="Ribosomal_uL11_N"/>
</dbReference>
<dbReference type="InterPro" id="IPR036796">
    <property type="entry name" value="Ribosomal_uL11_N_sf"/>
</dbReference>
<dbReference type="NCBIfam" id="TIGR01632">
    <property type="entry name" value="L11_bact"/>
    <property type="match status" value="1"/>
</dbReference>
<dbReference type="PANTHER" id="PTHR11661">
    <property type="entry name" value="60S RIBOSOMAL PROTEIN L12"/>
    <property type="match status" value="1"/>
</dbReference>
<dbReference type="PANTHER" id="PTHR11661:SF1">
    <property type="entry name" value="LARGE RIBOSOMAL SUBUNIT PROTEIN UL11M"/>
    <property type="match status" value="1"/>
</dbReference>
<dbReference type="Pfam" id="PF00298">
    <property type="entry name" value="Ribosomal_L11"/>
    <property type="match status" value="1"/>
</dbReference>
<dbReference type="Pfam" id="PF03946">
    <property type="entry name" value="Ribosomal_L11_N"/>
    <property type="match status" value="1"/>
</dbReference>
<dbReference type="SMART" id="SM00649">
    <property type="entry name" value="RL11"/>
    <property type="match status" value="1"/>
</dbReference>
<dbReference type="SUPFAM" id="SSF54747">
    <property type="entry name" value="Ribosomal L11/L12e N-terminal domain"/>
    <property type="match status" value="1"/>
</dbReference>
<dbReference type="SUPFAM" id="SSF46906">
    <property type="entry name" value="Ribosomal protein L11, C-terminal domain"/>
    <property type="match status" value="1"/>
</dbReference>
<dbReference type="PROSITE" id="PS00359">
    <property type="entry name" value="RIBOSOMAL_L11"/>
    <property type="match status" value="1"/>
</dbReference>
<feature type="chain" id="PRO_1000132862" description="Large ribosomal subunit protein uL11">
    <location>
        <begin position="1"/>
        <end position="141"/>
    </location>
</feature>
<gene>
    <name evidence="1" type="primary">rplK</name>
    <name type="ordered locus">BCG9842_B5209</name>
</gene>
<protein>
    <recommendedName>
        <fullName evidence="1">Large ribosomal subunit protein uL11</fullName>
    </recommendedName>
    <alternativeName>
        <fullName evidence="2">50S ribosomal protein L11</fullName>
    </alternativeName>
</protein>
<accession>B7IT06</accession>
<evidence type="ECO:0000255" key="1">
    <source>
        <dbReference type="HAMAP-Rule" id="MF_00736"/>
    </source>
</evidence>
<evidence type="ECO:0000305" key="2"/>
<comment type="function">
    <text evidence="1">Forms part of the ribosomal stalk which helps the ribosome interact with GTP-bound translation factors.</text>
</comment>
<comment type="subunit">
    <text evidence="1">Part of the ribosomal stalk of the 50S ribosomal subunit. Interacts with L10 and the large rRNA to form the base of the stalk. L10 forms an elongated spine to which L12 dimers bind in a sequential fashion forming a multimeric L10(L12)X complex.</text>
</comment>
<comment type="PTM">
    <text evidence="1">One or more lysine residues are methylated.</text>
</comment>
<comment type="similarity">
    <text evidence="1">Belongs to the universal ribosomal protein uL11 family.</text>
</comment>